<name>EAF1_CRYNB</name>
<proteinExistence type="inferred from homology"/>
<keyword id="KW-0010">Activator</keyword>
<keyword id="KW-0156">Chromatin regulator</keyword>
<keyword id="KW-0175">Coiled coil</keyword>
<keyword id="KW-0227">DNA damage</keyword>
<keyword id="KW-0234">DNA repair</keyword>
<keyword id="KW-0539">Nucleus</keyword>
<keyword id="KW-0804">Transcription</keyword>
<keyword id="KW-0805">Transcription regulation</keyword>
<accession>P0CO99</accession>
<accession>Q55V60</accession>
<accession>Q5KL22</accession>
<organism>
    <name type="scientific">Cryptococcus neoformans var. neoformans serotype D (strain B-3501A)</name>
    <name type="common">Filobasidiella neoformans</name>
    <dbReference type="NCBI Taxonomy" id="283643"/>
    <lineage>
        <taxon>Eukaryota</taxon>
        <taxon>Fungi</taxon>
        <taxon>Dikarya</taxon>
        <taxon>Basidiomycota</taxon>
        <taxon>Agaricomycotina</taxon>
        <taxon>Tremellomycetes</taxon>
        <taxon>Tremellales</taxon>
        <taxon>Cryptococcaceae</taxon>
        <taxon>Cryptococcus</taxon>
        <taxon>Cryptococcus neoformans species complex</taxon>
    </lineage>
</organism>
<protein>
    <recommendedName>
        <fullName>Chromatin modification-related protein EAF1</fullName>
    </recommendedName>
    <alternativeName>
        <fullName>ESA1-associated factor 1</fullName>
    </alternativeName>
    <alternativeName>
        <fullName>Vacuolar import and degradation protein 21</fullName>
    </alternativeName>
</protein>
<reference key="1">
    <citation type="journal article" date="2005" name="Science">
        <title>The genome of the basidiomycetous yeast and human pathogen Cryptococcus neoformans.</title>
        <authorList>
            <person name="Loftus B.J."/>
            <person name="Fung E."/>
            <person name="Roncaglia P."/>
            <person name="Rowley D."/>
            <person name="Amedeo P."/>
            <person name="Bruno D."/>
            <person name="Vamathevan J."/>
            <person name="Miranda M."/>
            <person name="Anderson I.J."/>
            <person name="Fraser J.A."/>
            <person name="Allen J.E."/>
            <person name="Bosdet I.E."/>
            <person name="Brent M.R."/>
            <person name="Chiu R."/>
            <person name="Doering T.L."/>
            <person name="Donlin M.J."/>
            <person name="D'Souza C.A."/>
            <person name="Fox D.S."/>
            <person name="Grinberg V."/>
            <person name="Fu J."/>
            <person name="Fukushima M."/>
            <person name="Haas B.J."/>
            <person name="Huang J.C."/>
            <person name="Janbon G."/>
            <person name="Jones S.J.M."/>
            <person name="Koo H.L."/>
            <person name="Krzywinski M.I."/>
            <person name="Kwon-Chung K.J."/>
            <person name="Lengeler K.B."/>
            <person name="Maiti R."/>
            <person name="Marra M.A."/>
            <person name="Marra R.E."/>
            <person name="Mathewson C.A."/>
            <person name="Mitchell T.G."/>
            <person name="Pertea M."/>
            <person name="Riggs F.R."/>
            <person name="Salzberg S.L."/>
            <person name="Schein J.E."/>
            <person name="Shvartsbeyn A."/>
            <person name="Shin H."/>
            <person name="Shumway M."/>
            <person name="Specht C.A."/>
            <person name="Suh B.B."/>
            <person name="Tenney A."/>
            <person name="Utterback T.R."/>
            <person name="Wickes B.L."/>
            <person name="Wortman J.R."/>
            <person name="Wye N.H."/>
            <person name="Kronstad J.W."/>
            <person name="Lodge J.K."/>
            <person name="Heitman J."/>
            <person name="Davis R.W."/>
            <person name="Fraser C.M."/>
            <person name="Hyman R.W."/>
        </authorList>
    </citation>
    <scope>NUCLEOTIDE SEQUENCE [LARGE SCALE GENOMIC DNA]</scope>
    <source>
        <strain>B-3501A</strain>
    </source>
</reference>
<dbReference type="EMBL" id="AAEY01000017">
    <property type="protein sequence ID" value="EAL21585.1"/>
    <property type="molecule type" value="Genomic_DNA"/>
</dbReference>
<dbReference type="RefSeq" id="XP_776232.1">
    <property type="nucleotide sequence ID" value="XM_771139.1"/>
</dbReference>
<dbReference type="SMR" id="P0CO99"/>
<dbReference type="EnsemblFungi" id="AAW42657">
    <property type="protein sequence ID" value="AAW42657"/>
    <property type="gene ID" value="CNC01040"/>
</dbReference>
<dbReference type="GeneID" id="4935289"/>
<dbReference type="KEGG" id="cnb:CNBC6230"/>
<dbReference type="VEuPathDB" id="FungiDB:CNBC6230"/>
<dbReference type="HOGENOM" id="CLU_268842_0_0_1"/>
<dbReference type="OrthoDB" id="8501at5206"/>
<dbReference type="GO" id="GO:0035267">
    <property type="term" value="C:NuA4 histone acetyltransferase complex"/>
    <property type="evidence" value="ECO:0007669"/>
    <property type="project" value="TreeGrafter"/>
</dbReference>
<dbReference type="GO" id="GO:0005634">
    <property type="term" value="C:nucleus"/>
    <property type="evidence" value="ECO:0007669"/>
    <property type="project" value="UniProtKB-SubCell"/>
</dbReference>
<dbReference type="GO" id="GO:0003682">
    <property type="term" value="F:chromatin binding"/>
    <property type="evidence" value="ECO:0007669"/>
    <property type="project" value="TreeGrafter"/>
</dbReference>
<dbReference type="GO" id="GO:0006325">
    <property type="term" value="P:chromatin organization"/>
    <property type="evidence" value="ECO:0007669"/>
    <property type="project" value="UniProtKB-KW"/>
</dbReference>
<dbReference type="GO" id="GO:0006281">
    <property type="term" value="P:DNA repair"/>
    <property type="evidence" value="ECO:0007669"/>
    <property type="project" value="UniProtKB-KW"/>
</dbReference>
<dbReference type="CDD" id="cd00167">
    <property type="entry name" value="SANT"/>
    <property type="match status" value="1"/>
</dbReference>
<dbReference type="Gene3D" id="1.10.10.60">
    <property type="entry name" value="Homeodomain-like"/>
    <property type="match status" value="1"/>
</dbReference>
<dbReference type="InterPro" id="IPR009057">
    <property type="entry name" value="Homeodomain-like_sf"/>
</dbReference>
<dbReference type="InterPro" id="IPR014012">
    <property type="entry name" value="HSA_dom"/>
</dbReference>
<dbReference type="InterPro" id="IPR017930">
    <property type="entry name" value="Myb_dom"/>
</dbReference>
<dbReference type="InterPro" id="IPR001005">
    <property type="entry name" value="SANT/Myb"/>
</dbReference>
<dbReference type="PANTHER" id="PTHR46459:SF1">
    <property type="entry name" value="E1A-BINDING PROTEIN P400"/>
    <property type="match status" value="1"/>
</dbReference>
<dbReference type="PANTHER" id="PTHR46459">
    <property type="entry name" value="E1A-BINDING PROTEIN P400-RELATED"/>
    <property type="match status" value="1"/>
</dbReference>
<dbReference type="Pfam" id="PF07529">
    <property type="entry name" value="HSA"/>
    <property type="match status" value="1"/>
</dbReference>
<dbReference type="Pfam" id="PF13921">
    <property type="entry name" value="Myb_DNA-bind_6"/>
    <property type="match status" value="1"/>
</dbReference>
<dbReference type="SMART" id="SM00573">
    <property type="entry name" value="HSA"/>
    <property type="match status" value="1"/>
</dbReference>
<dbReference type="SMART" id="SM00717">
    <property type="entry name" value="SANT"/>
    <property type="match status" value="1"/>
</dbReference>
<dbReference type="SUPFAM" id="SSF46689">
    <property type="entry name" value="Homeodomain-like"/>
    <property type="match status" value="1"/>
</dbReference>
<dbReference type="PROSITE" id="PS51204">
    <property type="entry name" value="HSA"/>
    <property type="match status" value="1"/>
</dbReference>
<comment type="function">
    <text evidence="1">Component of the NuA4 histone acetyltransferase complex which is involved in transcriptional activation of selected genes principally by acetylation of nucleosomal histone H4 and H2A. The NuA4 complex is also involved in DNA repair (By similarity).</text>
</comment>
<comment type="subunit">
    <text evidence="1">Component of the NuA4 histone acetyltransferase complex.</text>
</comment>
<comment type="subcellular location">
    <subcellularLocation>
        <location evidence="5">Nucleus</location>
    </subcellularLocation>
</comment>
<comment type="similarity">
    <text evidence="5">Belongs to the EAF1 family.</text>
</comment>
<gene>
    <name type="primary">EAF1</name>
    <name type="synonym">VID21</name>
    <name type="ordered locus">CNBC6230</name>
</gene>
<sequence length="985" mass="106869">MRHVRAMERIEAKKAENRWSLRQPKKARGPGVPKSHWDYMLEEMEWMRTDFAEERRWKVVEAREFAYQVVEWHLASPEEKKALMVGGRGWGECRNVPIPGHAGKRKEVTVEVEAEDEDVEMLVGQEGELDGEGEANKVLESIDEMRVNEKERENRPEDPRETVNINQDIGEEVDAEGEADADGEPENGEADAEGEADADGGPVGDDVVGLSEIDAAQDDTRETSERPSYRRDTVLPNGLVIHKRFANAYEIAIARGPVLDTPLANATVDLDTLTKSSSAATPATVPAEPSVSPDEPASFDQLFPDLAMYSGPAPPENDKKYRRDEGGTYSHRMAHTSRIMDIRPILVSTLQPAKNLIDGEWDLHDGPYYEEVKGAADIPPNVVAAFNTPFGGKASRPLEHMRVPEVPKPAAHHLRAQLLWSPEEDKCLLKLVAMYPFNWDLIADSFNTEMILIPVEKRNPYECWERWYYTFGEGKNKPRQDAPPSAPPPAPASATQPGTATATPVPQSAVTTPGVPPSANLPSASGRPQQTGGNSVSSLPTPTGEALPDGAPPPPGMSKRDRMAAKPKYEGTKRSVRHQAIYDAVKRMNRRREAARAKSHKDNAQRKVINVHESHSMSFPHVAASTPWELVEAKYQRDVQIAQQRQQRAMQEQQRQLAIRQQQAMMSAQQQAQMRPPNMPNVPNMPNAQPIRMGPNGQPMPTMAPSQQQLLNAVAAATAANRQNANGAVQGNPNVRPMPVVQGQSPQVQQQMLLQAQQMAAQQARVLQAQAQAQAQQGRAPSMGGNLQPPQLGVSSPFAQSRTPDLPAEGAGPSGINPTPSPAMQAAAIGAQSSPQIATMGRAPSNNVPPHLRVPNAGTSSPQISSPMALPQGIPNGAGMPVQGAQTQGIQIPAAMMNNATVQQLLATLAASGQQMTPEQLRGLMLRSAHMQAQAQSQVGNPGTPQMGVQNIQGVQHFARSPSLQNAQSQPRSSPKPGPANGQGT</sequence>
<feature type="chain" id="PRO_0000410156" description="Chromatin modification-related protein EAF1">
    <location>
        <begin position="1"/>
        <end position="985"/>
    </location>
</feature>
<feature type="domain" description="HSA" evidence="3">
    <location>
        <begin position="24"/>
        <end position="100"/>
    </location>
</feature>
<feature type="domain" description="Myb-like">
    <location>
        <begin position="412"/>
        <end position="471"/>
    </location>
</feature>
<feature type="region of interest" description="Disordered" evidence="4">
    <location>
        <begin position="124"/>
        <end position="230"/>
    </location>
</feature>
<feature type="region of interest" description="Disordered" evidence="4">
    <location>
        <begin position="275"/>
        <end position="295"/>
    </location>
</feature>
<feature type="region of interest" description="Disordered" evidence="4">
    <location>
        <begin position="475"/>
        <end position="575"/>
    </location>
</feature>
<feature type="region of interest" description="Disordered" evidence="4">
    <location>
        <begin position="773"/>
        <end position="813"/>
    </location>
</feature>
<feature type="region of interest" description="Disordered" evidence="4">
    <location>
        <begin position="932"/>
        <end position="985"/>
    </location>
</feature>
<feature type="coiled-coil region" evidence="2">
    <location>
        <begin position="591"/>
        <end position="664"/>
    </location>
</feature>
<feature type="compositionally biased region" description="Basic and acidic residues" evidence="4">
    <location>
        <begin position="143"/>
        <end position="161"/>
    </location>
</feature>
<feature type="compositionally biased region" description="Acidic residues" evidence="4">
    <location>
        <begin position="169"/>
        <end position="198"/>
    </location>
</feature>
<feature type="compositionally biased region" description="Basic and acidic residues" evidence="4">
    <location>
        <begin position="218"/>
        <end position="230"/>
    </location>
</feature>
<feature type="compositionally biased region" description="Low complexity" evidence="4">
    <location>
        <begin position="275"/>
        <end position="290"/>
    </location>
</feature>
<feature type="compositionally biased region" description="Low complexity" evidence="4">
    <location>
        <begin position="492"/>
        <end position="507"/>
    </location>
</feature>
<feature type="compositionally biased region" description="Polar residues" evidence="4">
    <location>
        <begin position="520"/>
        <end position="541"/>
    </location>
</feature>
<feature type="compositionally biased region" description="Basic and acidic residues" evidence="4">
    <location>
        <begin position="558"/>
        <end position="573"/>
    </location>
</feature>
<feature type="compositionally biased region" description="Low complexity" evidence="4">
    <location>
        <begin position="773"/>
        <end position="782"/>
    </location>
</feature>
<feature type="compositionally biased region" description="Polar residues" evidence="4">
    <location>
        <begin position="793"/>
        <end position="803"/>
    </location>
</feature>
<feature type="compositionally biased region" description="Polar residues" evidence="4">
    <location>
        <begin position="932"/>
        <end position="954"/>
    </location>
</feature>
<feature type="compositionally biased region" description="Polar residues" evidence="4">
    <location>
        <begin position="962"/>
        <end position="973"/>
    </location>
</feature>
<evidence type="ECO:0000250" key="1"/>
<evidence type="ECO:0000255" key="2"/>
<evidence type="ECO:0000255" key="3">
    <source>
        <dbReference type="PROSITE-ProRule" id="PRU00549"/>
    </source>
</evidence>
<evidence type="ECO:0000256" key="4">
    <source>
        <dbReference type="SAM" id="MobiDB-lite"/>
    </source>
</evidence>
<evidence type="ECO:0000305" key="5"/>